<dbReference type="EMBL" id="AF044956">
    <property type="protein sequence ID" value="AAD42057.1"/>
    <property type="molecule type" value="mRNA"/>
</dbReference>
<dbReference type="EMBL" id="AF261090">
    <property type="protein sequence ID" value="AAF99683.1"/>
    <property type="molecule type" value="mRNA"/>
</dbReference>
<dbReference type="EMBL" id="AF067168">
    <property type="protein sequence ID" value="AAD32452.1"/>
    <property type="molecule type" value="mRNA"/>
</dbReference>
<dbReference type="EMBL" id="AK313432">
    <property type="protein sequence ID" value="BAG36223.1"/>
    <property type="molecule type" value="mRNA"/>
</dbReference>
<dbReference type="EMBL" id="CH471060">
    <property type="protein sequence ID" value="EAW92068.1"/>
    <property type="molecule type" value="Genomic_DNA"/>
</dbReference>
<dbReference type="EMBL" id="BC007672">
    <property type="protein sequence ID" value="AAH07672.1"/>
    <property type="molecule type" value="mRNA"/>
</dbReference>
<dbReference type="CCDS" id="CCDS6352.1"/>
<dbReference type="RefSeq" id="NP_001298097.1">
    <property type="nucleotide sequence ID" value="NM_001311168.1"/>
</dbReference>
<dbReference type="RefSeq" id="NP_004996.1">
    <property type="nucleotide sequence ID" value="NM_005005.3"/>
</dbReference>
<dbReference type="PDB" id="5XTC">
    <property type="method" value="EM"/>
    <property type="resolution" value="3.70 A"/>
    <property type="chains" value="p=8-179"/>
</dbReference>
<dbReference type="PDB" id="5XTD">
    <property type="method" value="EM"/>
    <property type="resolution" value="3.70 A"/>
    <property type="chains" value="p=8-179"/>
</dbReference>
<dbReference type="PDB" id="5XTH">
    <property type="method" value="EM"/>
    <property type="resolution" value="3.90 A"/>
    <property type="chains" value="p=8-179"/>
</dbReference>
<dbReference type="PDB" id="5XTI">
    <property type="method" value="EM"/>
    <property type="resolution" value="17.40 A"/>
    <property type="chains" value="Bp/p=8-179"/>
</dbReference>
<dbReference type="PDBsum" id="5XTC"/>
<dbReference type="PDBsum" id="5XTD"/>
<dbReference type="PDBsum" id="5XTH"/>
<dbReference type="PDBsum" id="5XTI"/>
<dbReference type="SMR" id="Q9Y6M9"/>
<dbReference type="BioGRID" id="110795">
    <property type="interactions" value="143"/>
</dbReference>
<dbReference type="ComplexPortal" id="CPX-577">
    <property type="entry name" value="Mitochondrial respiratory chain complex I"/>
</dbReference>
<dbReference type="CORUM" id="Q9Y6M9"/>
<dbReference type="FunCoup" id="Q9Y6M9">
    <property type="interactions" value="1627"/>
</dbReference>
<dbReference type="IntAct" id="Q9Y6M9">
    <property type="interactions" value="68"/>
</dbReference>
<dbReference type="MINT" id="Q9Y6M9"/>
<dbReference type="STRING" id="9606.ENSP00000276689"/>
<dbReference type="BindingDB" id="Q9Y6M9"/>
<dbReference type="ChEMBL" id="CHEMBL2363065"/>
<dbReference type="DrugBank" id="DB00157">
    <property type="generic name" value="NADH"/>
</dbReference>
<dbReference type="DrugCentral" id="Q9Y6M9"/>
<dbReference type="GlyGen" id="Q9Y6M9">
    <property type="glycosylation" value="1 site, 1 O-linked glycan (1 site)"/>
</dbReference>
<dbReference type="iPTMnet" id="Q9Y6M9"/>
<dbReference type="PhosphoSitePlus" id="Q9Y6M9"/>
<dbReference type="SwissPalm" id="Q9Y6M9"/>
<dbReference type="BioMuta" id="NDUFB9"/>
<dbReference type="DMDM" id="8134589"/>
<dbReference type="jPOST" id="Q9Y6M9"/>
<dbReference type="MassIVE" id="Q9Y6M9"/>
<dbReference type="PaxDb" id="9606-ENSP00000276689"/>
<dbReference type="PeptideAtlas" id="Q9Y6M9"/>
<dbReference type="ProteomicsDB" id="86739"/>
<dbReference type="Pumba" id="Q9Y6M9"/>
<dbReference type="TopDownProteomics" id="Q9Y6M9"/>
<dbReference type="Antibodypedia" id="27088">
    <property type="antibodies" value="352 antibodies from 35 providers"/>
</dbReference>
<dbReference type="DNASU" id="4715"/>
<dbReference type="Ensembl" id="ENST00000276689.8">
    <property type="protein sequence ID" value="ENSP00000276689.3"/>
    <property type="gene ID" value="ENSG00000147684.10"/>
</dbReference>
<dbReference type="Ensembl" id="ENST00000677021.1">
    <property type="protein sequence ID" value="ENSP00000504235.1"/>
    <property type="gene ID" value="ENSG00000147684.10"/>
</dbReference>
<dbReference type="GeneID" id="4715"/>
<dbReference type="KEGG" id="hsa:4715"/>
<dbReference type="MANE-Select" id="ENST00000276689.8">
    <property type="protein sequence ID" value="ENSP00000276689.3"/>
    <property type="RefSeq nucleotide sequence ID" value="NM_005005.3"/>
    <property type="RefSeq protein sequence ID" value="NP_004996.1"/>
</dbReference>
<dbReference type="UCSC" id="uc003yrg.5">
    <property type="organism name" value="human"/>
</dbReference>
<dbReference type="AGR" id="HGNC:7704"/>
<dbReference type="CTD" id="4715"/>
<dbReference type="DisGeNET" id="4715"/>
<dbReference type="GeneCards" id="NDUFB9"/>
<dbReference type="HGNC" id="HGNC:7704">
    <property type="gene designation" value="NDUFB9"/>
</dbReference>
<dbReference type="HPA" id="ENSG00000147684">
    <property type="expression patterns" value="Tissue enhanced (skeletal muscle, tongue)"/>
</dbReference>
<dbReference type="MalaCards" id="NDUFB9"/>
<dbReference type="MIM" id="601445">
    <property type="type" value="gene"/>
</dbReference>
<dbReference type="MIM" id="618245">
    <property type="type" value="phenotype"/>
</dbReference>
<dbReference type="neXtProt" id="NX_Q9Y6M9"/>
<dbReference type="OpenTargets" id="ENSG00000147684"/>
<dbReference type="Orphanet" id="2609">
    <property type="disease" value="Isolated complex I deficiency"/>
</dbReference>
<dbReference type="PharmGKB" id="PA31515"/>
<dbReference type="VEuPathDB" id="HostDB:ENSG00000147684"/>
<dbReference type="eggNOG" id="KOG3466">
    <property type="taxonomic scope" value="Eukaryota"/>
</dbReference>
<dbReference type="GeneTree" id="ENSGT00390000005809"/>
<dbReference type="HOGENOM" id="CLU_108081_0_0_1"/>
<dbReference type="InParanoid" id="Q9Y6M9"/>
<dbReference type="OMA" id="CVFRDKY"/>
<dbReference type="OrthoDB" id="13598at2759"/>
<dbReference type="PAN-GO" id="Q9Y6M9">
    <property type="GO annotations" value="1 GO annotation based on evolutionary models"/>
</dbReference>
<dbReference type="PhylomeDB" id="Q9Y6M9"/>
<dbReference type="TreeFam" id="TF315148"/>
<dbReference type="BioCyc" id="MetaCyc:HS07466-MONOMER"/>
<dbReference type="PathwayCommons" id="Q9Y6M9"/>
<dbReference type="Reactome" id="R-HSA-611105">
    <property type="pathway name" value="Respiratory electron transport"/>
</dbReference>
<dbReference type="Reactome" id="R-HSA-6799198">
    <property type="pathway name" value="Complex I biogenesis"/>
</dbReference>
<dbReference type="SignaLink" id="Q9Y6M9"/>
<dbReference type="SIGNOR" id="Q9Y6M9"/>
<dbReference type="BioGRID-ORCS" id="4715">
    <property type="hits" value="449 hits in 1177 CRISPR screens"/>
</dbReference>
<dbReference type="CD-CODE" id="FB4E32DD">
    <property type="entry name" value="Presynaptic clusters and postsynaptic densities"/>
</dbReference>
<dbReference type="ChiTaRS" id="NDUFB9">
    <property type="organism name" value="human"/>
</dbReference>
<dbReference type="GeneWiki" id="NDUFB9"/>
<dbReference type="GenomeRNAi" id="4715"/>
<dbReference type="Pharos" id="Q9Y6M9">
    <property type="development level" value="Tclin"/>
</dbReference>
<dbReference type="PRO" id="PR:Q9Y6M9"/>
<dbReference type="Proteomes" id="UP000005640">
    <property type="component" value="Chromosome 8"/>
</dbReference>
<dbReference type="RNAct" id="Q9Y6M9">
    <property type="molecule type" value="protein"/>
</dbReference>
<dbReference type="Bgee" id="ENSG00000147684">
    <property type="expression patterns" value="Expressed in left ventricle myocardium and 190 other cell types or tissues"/>
</dbReference>
<dbReference type="ExpressionAtlas" id="Q9Y6M9">
    <property type="expression patterns" value="baseline and differential"/>
</dbReference>
<dbReference type="GO" id="GO:0005743">
    <property type="term" value="C:mitochondrial inner membrane"/>
    <property type="evidence" value="ECO:0000314"/>
    <property type="project" value="ComplexPortal"/>
</dbReference>
<dbReference type="GO" id="GO:0005739">
    <property type="term" value="C:mitochondrion"/>
    <property type="evidence" value="ECO:0000314"/>
    <property type="project" value="HPA"/>
</dbReference>
<dbReference type="GO" id="GO:0045271">
    <property type="term" value="C:respiratory chain complex I"/>
    <property type="evidence" value="ECO:0000314"/>
    <property type="project" value="UniProtKB"/>
</dbReference>
<dbReference type="GO" id="GO:0008137">
    <property type="term" value="F:NADH dehydrogenase (ubiquinone) activity"/>
    <property type="evidence" value="ECO:0000304"/>
    <property type="project" value="ProtInc"/>
</dbReference>
<dbReference type="GO" id="GO:0009060">
    <property type="term" value="P:aerobic respiration"/>
    <property type="evidence" value="ECO:0000303"/>
    <property type="project" value="ComplexPortal"/>
</dbReference>
<dbReference type="GO" id="GO:0006120">
    <property type="term" value="P:mitochondrial electron transport, NADH to ubiquinone"/>
    <property type="evidence" value="ECO:0000304"/>
    <property type="project" value="ProtInc"/>
</dbReference>
<dbReference type="GO" id="GO:0042776">
    <property type="term" value="P:proton motive force-driven mitochondrial ATP synthesis"/>
    <property type="evidence" value="ECO:0000303"/>
    <property type="project" value="ComplexPortal"/>
</dbReference>
<dbReference type="GO" id="GO:0007605">
    <property type="term" value="P:sensory perception of sound"/>
    <property type="evidence" value="ECO:0000304"/>
    <property type="project" value="ProtInc"/>
</dbReference>
<dbReference type="CDD" id="cd20263">
    <property type="entry name" value="Complex1_LYR_NDUFB9_LYRM3"/>
    <property type="match status" value="1"/>
</dbReference>
<dbReference type="InterPro" id="IPR008011">
    <property type="entry name" value="Complex1_LYR_dom"/>
</dbReference>
<dbReference type="InterPro" id="IPR045292">
    <property type="entry name" value="Complex1_LYR_NDUFB9_LYRM3"/>
</dbReference>
<dbReference type="InterPro" id="IPR033034">
    <property type="entry name" value="NDUFB9"/>
</dbReference>
<dbReference type="PANTHER" id="PTHR12868:SF1">
    <property type="entry name" value="NADH DEHYDROGENASE [UBIQUINONE] 1 BETA SUBCOMPLEX SUBUNIT 9"/>
    <property type="match status" value="1"/>
</dbReference>
<dbReference type="PANTHER" id="PTHR12868">
    <property type="entry name" value="NADH-UBIQUINONE OXIDOREDUCTASE B22 SUBUNIT"/>
    <property type="match status" value="1"/>
</dbReference>
<dbReference type="Pfam" id="PF05347">
    <property type="entry name" value="Complex1_LYR"/>
    <property type="match status" value="1"/>
</dbReference>
<name>NDUB9_HUMAN</name>
<protein>
    <recommendedName>
        <fullName>NADH dehydrogenase [ubiquinone] 1 beta subcomplex subunit 9</fullName>
    </recommendedName>
    <alternativeName>
        <fullName>Complex I-B22</fullName>
        <shortName>CI-B22</shortName>
    </alternativeName>
    <alternativeName>
        <fullName>LYR motif-containing protein 3</fullName>
    </alternativeName>
    <alternativeName>
        <fullName>NADH-ubiquinone oxidoreductase B22 subunit</fullName>
    </alternativeName>
</protein>
<feature type="initiator methionine" description="Removed" evidence="6 10">
    <location>
        <position position="1"/>
    </location>
</feature>
<feature type="chain" id="PRO_0000174306" description="NADH dehydrogenase [ubiquinone] 1 beta subcomplex subunit 9">
    <location>
        <begin position="2"/>
        <end position="179"/>
    </location>
</feature>
<feature type="region of interest" description="Disordered" evidence="1">
    <location>
        <begin position="136"/>
        <end position="162"/>
    </location>
</feature>
<feature type="modified residue" description="N-acetylalanine" evidence="6 10">
    <location>
        <position position="2"/>
    </location>
</feature>
<feature type="modified residue" description="Phosphoserine" evidence="9">
    <location>
        <position position="85"/>
    </location>
</feature>
<feature type="sequence variant" id="VAR_081460" description="In MC1DN24; dbSNP:rs776388520." evidence="4">
    <original>L</original>
    <variation>P</variation>
    <location>
        <position position="64"/>
    </location>
</feature>
<feature type="sequence variant" id="VAR_014484" description="In dbSNP:rs10195." evidence="2">
    <original>P</original>
    <variation>S</variation>
    <location>
        <position position="146"/>
    </location>
</feature>
<gene>
    <name type="primary">NDUFB9</name>
    <name type="synonym">LYRM3</name>
    <name type="synonym">UQOR22</name>
</gene>
<keyword id="KW-0002">3D-structure</keyword>
<keyword id="KW-0007">Acetylation</keyword>
<keyword id="KW-0903">Direct protein sequencing</keyword>
<keyword id="KW-0225">Disease variant</keyword>
<keyword id="KW-0249">Electron transport</keyword>
<keyword id="KW-0472">Membrane</keyword>
<keyword id="KW-0496">Mitochondrion</keyword>
<keyword id="KW-0999">Mitochondrion inner membrane</keyword>
<keyword id="KW-0597">Phosphoprotein</keyword>
<keyword id="KW-1274">Primary mitochondrial disease</keyword>
<keyword id="KW-1267">Proteomics identification</keyword>
<keyword id="KW-1185">Reference proteome</keyword>
<keyword id="KW-0679">Respiratory chain</keyword>
<keyword id="KW-0813">Transport</keyword>
<proteinExistence type="evidence at protein level"/>
<evidence type="ECO:0000256" key="1">
    <source>
        <dbReference type="SAM" id="MobiDB-lite"/>
    </source>
</evidence>
<evidence type="ECO:0000269" key="2">
    <source>
    </source>
</evidence>
<evidence type="ECO:0000269" key="3">
    <source>
    </source>
</evidence>
<evidence type="ECO:0000269" key="4">
    <source>
    </source>
</evidence>
<evidence type="ECO:0000269" key="5">
    <source>
    </source>
</evidence>
<evidence type="ECO:0000269" key="6">
    <source ref="8"/>
</evidence>
<evidence type="ECO:0000305" key="7"/>
<evidence type="ECO:0000305" key="8">
    <source>
    </source>
</evidence>
<evidence type="ECO:0007744" key="9">
    <source>
    </source>
</evidence>
<evidence type="ECO:0007744" key="10">
    <source>
    </source>
</evidence>
<comment type="function">
    <text evidence="5">Accessory subunit of the mitochondrial membrane respiratory chain NADH dehydrogenase (Complex I), that is believed to be not involved in catalysis. Complex I functions in the transfer of electrons from NADH to the respiratory chain. The immediate electron acceptor for the enzyme is believed to be ubiquinone.</text>
</comment>
<comment type="subunit">
    <text evidence="3 5">Mammalian complex I is composed of 45 different subunits.</text>
</comment>
<comment type="interaction">
    <interactant intactId="EBI-713654">
        <id>Q9Y6M9</id>
    </interactant>
    <interactant intactId="EBI-466029">
        <id>P42858</id>
        <label>HTT</label>
    </interactant>
    <organismsDiffer>false</organismsDiffer>
    <experiments>10</experiments>
</comment>
<comment type="interaction">
    <interactant intactId="EBI-713654">
        <id>Q9Y6M9</id>
    </interactant>
    <interactant intactId="EBI-739552">
        <id>P43364</id>
        <label>MAGEA11</label>
    </interactant>
    <organismsDiffer>false</organismsDiffer>
    <experiments>4</experiments>
</comment>
<comment type="interaction">
    <interactant intactId="EBI-713654">
        <id>Q9Y6M9</id>
    </interactant>
    <interactant intactId="EBI-10178634">
        <id>P43364-2</id>
        <label>MAGEA11</label>
    </interactant>
    <organismsDiffer>false</organismsDiffer>
    <experiments>3</experiments>
</comment>
<comment type="interaction">
    <interactant intactId="EBI-713654">
        <id>Q9Y6M9</id>
    </interactant>
    <interactant intactId="EBI-717201">
        <id>Q9UQ90</id>
        <label>SPG7</label>
    </interactant>
    <organismsDiffer>false</organismsDiffer>
    <experiments>2</experiments>
</comment>
<comment type="subcellular location">
    <subcellularLocation>
        <location evidence="8">Mitochondrion inner membrane</location>
        <topology evidence="7">Peripheral membrane protein</topology>
        <orientation evidence="7">Matrix side</orientation>
    </subcellularLocation>
</comment>
<comment type="disease" evidence="4">
    <disease id="DI-05420">
        <name>Mitochondrial complex I deficiency, nuclear type 24</name>
        <acronym>MC1DN24</acronym>
        <description>A form of mitochondrial complex I deficiency, the most common biochemical signature of mitochondrial disorders, a group of highly heterogeneous conditions characterized by defective oxidative phosphorylation, which collectively affects 1 in 5-10000 live births. Clinical disorders have variable severity, ranging from lethal neonatal disease to adult-onset neurodegenerative disorders. Phenotypes include macrocephaly with progressive leukodystrophy, non-specific encephalopathy, cardiomyopathy, myopathy, liver disease, Leigh syndrome, Leber hereditary optic neuropathy, and some forms of Parkinson disease. MC1DN24 transmission pattern is consistent with autosomal recessive inheritance.</description>
        <dbReference type="MIM" id="618245"/>
    </disease>
    <text>The disease is caused by variants affecting the gene represented in this entry.</text>
</comment>
<comment type="similarity">
    <text evidence="7">Belongs to the complex I LYR family.</text>
</comment>
<accession>Q9Y6M9</accession>
<accession>B2R8M6</accession>
<accession>Q9UQE8</accession>
<organism>
    <name type="scientific">Homo sapiens</name>
    <name type="common">Human</name>
    <dbReference type="NCBI Taxonomy" id="9606"/>
    <lineage>
        <taxon>Eukaryota</taxon>
        <taxon>Metazoa</taxon>
        <taxon>Chordata</taxon>
        <taxon>Craniata</taxon>
        <taxon>Vertebrata</taxon>
        <taxon>Euteleostomi</taxon>
        <taxon>Mammalia</taxon>
        <taxon>Eutheria</taxon>
        <taxon>Euarchontoglires</taxon>
        <taxon>Primates</taxon>
        <taxon>Haplorrhini</taxon>
        <taxon>Catarrhini</taxon>
        <taxon>Hominidae</taxon>
        <taxon>Homo</taxon>
    </lineage>
</organism>
<reference key="1">
    <citation type="submission" date="1998-01" db="EMBL/GenBank/DDBJ databases">
        <title>B22 subunit of NADH:ubiquinone oxidoreductase (complex I).</title>
        <authorList>
            <person name="Triepels R."/>
            <person name="Smeets R."/>
            <person name="Loeffen J."/>
            <person name="Ruitenbeek W."/>
            <person name="van den Heuvel L."/>
            <person name="Smeitink J."/>
        </authorList>
    </citation>
    <scope>NUCLEOTIDE SEQUENCE [MRNA]</scope>
</reference>
<reference key="2">
    <citation type="journal article" date="1999" name="Hum. Hered.">
        <title>Human NDUFB9 gene: genomic organization and a possible candidate gene associated with deafness disorder mapped to chromosome 8q13.</title>
        <authorList>
            <person name="Lin X."/>
            <person name="Wells D.E."/>
            <person name="Kimberling W.J."/>
            <person name="Kumar S."/>
        </authorList>
    </citation>
    <scope>NUCLEOTIDE SEQUENCE [MRNA]</scope>
</reference>
<reference key="3">
    <citation type="journal article" date="2000" name="Biochem. Biophys. Res. Commun.">
        <title>cDNA cloning by amplification of circularized first strand cDNAs reveals non-IRE-regulated iron-responsive mRNAs.</title>
        <authorList>
            <person name="Ye Z."/>
            <person name="Connor J.R."/>
        </authorList>
    </citation>
    <scope>NUCLEOTIDE SEQUENCE [MRNA]</scope>
    <source>
        <tissue>Astrocytoma</tissue>
    </source>
</reference>
<reference key="4">
    <citation type="journal article" date="2000" name="Genome Res.">
        <title>Cloning and functional analysis of cDNAs with open reading frames for 300 previously undefined genes expressed in CD34+ hematopoietic stem/progenitor cells.</title>
        <authorList>
            <person name="Zhang Q.-H."/>
            <person name="Ye M."/>
            <person name="Wu X.-Y."/>
            <person name="Ren S.-X."/>
            <person name="Zhao M."/>
            <person name="Zhao C.-J."/>
            <person name="Fu G."/>
            <person name="Shen Y."/>
            <person name="Fan H.-Y."/>
            <person name="Lu G."/>
            <person name="Zhong M."/>
            <person name="Xu X.-R."/>
            <person name="Han Z.-G."/>
            <person name="Zhang J.-W."/>
            <person name="Tao J."/>
            <person name="Huang Q.-H."/>
            <person name="Zhou J."/>
            <person name="Hu G.-X."/>
            <person name="Gu J."/>
            <person name="Chen S.-J."/>
            <person name="Chen Z."/>
        </authorList>
    </citation>
    <scope>NUCLEOTIDE SEQUENCE [LARGE SCALE MRNA]</scope>
    <scope>VARIANT SER-146</scope>
    <source>
        <tissue>Umbilical cord blood</tissue>
    </source>
</reference>
<reference key="5">
    <citation type="journal article" date="2004" name="Nat. Genet.">
        <title>Complete sequencing and characterization of 21,243 full-length human cDNAs.</title>
        <authorList>
            <person name="Ota T."/>
            <person name="Suzuki Y."/>
            <person name="Nishikawa T."/>
            <person name="Otsuki T."/>
            <person name="Sugiyama T."/>
            <person name="Irie R."/>
            <person name="Wakamatsu A."/>
            <person name="Hayashi K."/>
            <person name="Sato H."/>
            <person name="Nagai K."/>
            <person name="Kimura K."/>
            <person name="Makita H."/>
            <person name="Sekine M."/>
            <person name="Obayashi M."/>
            <person name="Nishi T."/>
            <person name="Shibahara T."/>
            <person name="Tanaka T."/>
            <person name="Ishii S."/>
            <person name="Yamamoto J."/>
            <person name="Saito K."/>
            <person name="Kawai Y."/>
            <person name="Isono Y."/>
            <person name="Nakamura Y."/>
            <person name="Nagahari K."/>
            <person name="Murakami K."/>
            <person name="Yasuda T."/>
            <person name="Iwayanagi T."/>
            <person name="Wagatsuma M."/>
            <person name="Shiratori A."/>
            <person name="Sudo H."/>
            <person name="Hosoiri T."/>
            <person name="Kaku Y."/>
            <person name="Kodaira H."/>
            <person name="Kondo H."/>
            <person name="Sugawara M."/>
            <person name="Takahashi M."/>
            <person name="Kanda K."/>
            <person name="Yokoi T."/>
            <person name="Furuya T."/>
            <person name="Kikkawa E."/>
            <person name="Omura Y."/>
            <person name="Abe K."/>
            <person name="Kamihara K."/>
            <person name="Katsuta N."/>
            <person name="Sato K."/>
            <person name="Tanikawa M."/>
            <person name="Yamazaki M."/>
            <person name="Ninomiya K."/>
            <person name="Ishibashi T."/>
            <person name="Yamashita H."/>
            <person name="Murakawa K."/>
            <person name="Fujimori K."/>
            <person name="Tanai H."/>
            <person name="Kimata M."/>
            <person name="Watanabe M."/>
            <person name="Hiraoka S."/>
            <person name="Chiba Y."/>
            <person name="Ishida S."/>
            <person name="Ono Y."/>
            <person name="Takiguchi S."/>
            <person name="Watanabe S."/>
            <person name="Yosida M."/>
            <person name="Hotuta T."/>
            <person name="Kusano J."/>
            <person name="Kanehori K."/>
            <person name="Takahashi-Fujii A."/>
            <person name="Hara H."/>
            <person name="Tanase T.-O."/>
            <person name="Nomura Y."/>
            <person name="Togiya S."/>
            <person name="Komai F."/>
            <person name="Hara R."/>
            <person name="Takeuchi K."/>
            <person name="Arita M."/>
            <person name="Imose N."/>
            <person name="Musashino K."/>
            <person name="Yuuki H."/>
            <person name="Oshima A."/>
            <person name="Sasaki N."/>
            <person name="Aotsuka S."/>
            <person name="Yoshikawa Y."/>
            <person name="Matsunawa H."/>
            <person name="Ichihara T."/>
            <person name="Shiohata N."/>
            <person name="Sano S."/>
            <person name="Moriya S."/>
            <person name="Momiyama H."/>
            <person name="Satoh N."/>
            <person name="Takami S."/>
            <person name="Terashima Y."/>
            <person name="Suzuki O."/>
            <person name="Nakagawa S."/>
            <person name="Senoh A."/>
            <person name="Mizoguchi H."/>
            <person name="Goto Y."/>
            <person name="Shimizu F."/>
            <person name="Wakebe H."/>
            <person name="Hishigaki H."/>
            <person name="Watanabe T."/>
            <person name="Sugiyama A."/>
            <person name="Takemoto M."/>
            <person name="Kawakami B."/>
            <person name="Yamazaki M."/>
            <person name="Watanabe K."/>
            <person name="Kumagai A."/>
            <person name="Itakura S."/>
            <person name="Fukuzumi Y."/>
            <person name="Fujimori Y."/>
            <person name="Komiyama M."/>
            <person name="Tashiro H."/>
            <person name="Tanigami A."/>
            <person name="Fujiwara T."/>
            <person name="Ono T."/>
            <person name="Yamada K."/>
            <person name="Fujii Y."/>
            <person name="Ozaki K."/>
            <person name="Hirao M."/>
            <person name="Ohmori Y."/>
            <person name="Kawabata A."/>
            <person name="Hikiji T."/>
            <person name="Kobatake N."/>
            <person name="Inagaki H."/>
            <person name="Ikema Y."/>
            <person name="Okamoto S."/>
            <person name="Okitani R."/>
            <person name="Kawakami T."/>
            <person name="Noguchi S."/>
            <person name="Itoh T."/>
            <person name="Shigeta K."/>
            <person name="Senba T."/>
            <person name="Matsumura K."/>
            <person name="Nakajima Y."/>
            <person name="Mizuno T."/>
            <person name="Morinaga M."/>
            <person name="Sasaki M."/>
            <person name="Togashi T."/>
            <person name="Oyama M."/>
            <person name="Hata H."/>
            <person name="Watanabe M."/>
            <person name="Komatsu T."/>
            <person name="Mizushima-Sugano J."/>
            <person name="Satoh T."/>
            <person name="Shirai Y."/>
            <person name="Takahashi Y."/>
            <person name="Nakagawa K."/>
            <person name="Okumura K."/>
            <person name="Nagase T."/>
            <person name="Nomura N."/>
            <person name="Kikuchi H."/>
            <person name="Masuho Y."/>
            <person name="Yamashita R."/>
            <person name="Nakai K."/>
            <person name="Yada T."/>
            <person name="Nakamura Y."/>
            <person name="Ohara O."/>
            <person name="Isogai T."/>
            <person name="Sugano S."/>
        </authorList>
    </citation>
    <scope>NUCLEOTIDE SEQUENCE [LARGE SCALE MRNA]</scope>
    <source>
        <tissue>Cerebellum</tissue>
    </source>
</reference>
<reference key="6">
    <citation type="submission" date="2005-07" db="EMBL/GenBank/DDBJ databases">
        <authorList>
            <person name="Mural R.J."/>
            <person name="Istrail S."/>
            <person name="Sutton G.G."/>
            <person name="Florea L."/>
            <person name="Halpern A.L."/>
            <person name="Mobarry C.M."/>
            <person name="Lippert R."/>
            <person name="Walenz B."/>
            <person name="Shatkay H."/>
            <person name="Dew I."/>
            <person name="Miller J.R."/>
            <person name="Flanigan M.J."/>
            <person name="Edwards N.J."/>
            <person name="Bolanos R."/>
            <person name="Fasulo D."/>
            <person name="Halldorsson B.V."/>
            <person name="Hannenhalli S."/>
            <person name="Turner R."/>
            <person name="Yooseph S."/>
            <person name="Lu F."/>
            <person name="Nusskern D.R."/>
            <person name="Shue B.C."/>
            <person name="Zheng X.H."/>
            <person name="Zhong F."/>
            <person name="Delcher A.L."/>
            <person name="Huson D.H."/>
            <person name="Kravitz S.A."/>
            <person name="Mouchard L."/>
            <person name="Reinert K."/>
            <person name="Remington K.A."/>
            <person name="Clark A.G."/>
            <person name="Waterman M.S."/>
            <person name="Eichler E.E."/>
            <person name="Adams M.D."/>
            <person name="Hunkapiller M.W."/>
            <person name="Myers E.W."/>
            <person name="Venter J.C."/>
        </authorList>
    </citation>
    <scope>NUCLEOTIDE SEQUENCE [LARGE SCALE GENOMIC DNA]</scope>
</reference>
<reference key="7">
    <citation type="journal article" date="2004" name="Genome Res.">
        <title>The status, quality, and expansion of the NIH full-length cDNA project: the Mammalian Gene Collection (MGC).</title>
        <authorList>
            <consortium name="The MGC Project Team"/>
        </authorList>
    </citation>
    <scope>NUCLEOTIDE SEQUENCE [LARGE SCALE MRNA]</scope>
    <source>
        <tissue>Brain</tissue>
    </source>
</reference>
<reference key="8">
    <citation type="submission" date="2007-07" db="UniProtKB">
        <authorList>
            <person name="Bienvenut W.V."/>
            <person name="Murray L."/>
            <person name="Brunton V.G."/>
            <person name="Frame M.C."/>
        </authorList>
    </citation>
    <scope>PROTEIN SEQUENCE OF 2-15</scope>
    <scope>CLEAVAGE OF INITIATOR METHIONINE</scope>
    <scope>ACETYLATION AT ALA-2</scope>
    <scope>IDENTIFICATION BY MASS SPECTROMETRY</scope>
    <source>
        <tissue>Colon adenocarcinoma</tissue>
    </source>
</reference>
<reference key="9">
    <citation type="journal article" date="2003" name="J. Biol. Chem.">
        <title>The subunit composition of the human NADH dehydrogenase obtained by rapid one-step immunopurification.</title>
        <authorList>
            <person name="Murray J."/>
            <person name="Zhang B."/>
            <person name="Taylor S.W."/>
            <person name="Oglesbee D."/>
            <person name="Fahy E."/>
            <person name="Marusich M.F."/>
            <person name="Ghosh S.S."/>
            <person name="Capaldi R.A."/>
        </authorList>
    </citation>
    <scope>IDENTIFICATION IN THE NADH-UBIQUINONE OXIDOREDUCTASE COMPLEX</scope>
    <scope>IDENTIFICATION BY MASS SPECTROMETRY</scope>
    <scope>SUBCELLULAR LOCATION</scope>
</reference>
<reference key="10">
    <citation type="journal article" date="2008" name="Mol. Cell">
        <title>Kinase-selective enrichment enables quantitative phosphoproteomics of the kinome across the cell cycle.</title>
        <authorList>
            <person name="Daub H."/>
            <person name="Olsen J.V."/>
            <person name="Bairlein M."/>
            <person name="Gnad F."/>
            <person name="Oppermann F.S."/>
            <person name="Korner R."/>
            <person name="Greff Z."/>
            <person name="Keri G."/>
            <person name="Stemmann O."/>
            <person name="Mann M."/>
        </authorList>
    </citation>
    <scope>PHOSPHORYLATION [LARGE SCALE ANALYSIS] AT SER-85</scope>
    <scope>IDENTIFICATION BY MASS SPECTROMETRY [LARGE SCALE ANALYSIS]</scope>
    <source>
        <tissue>Cervix carcinoma</tissue>
    </source>
</reference>
<reference key="11">
    <citation type="journal article" date="2011" name="BMC Syst. Biol.">
        <title>Initial characterization of the human central proteome.</title>
        <authorList>
            <person name="Burkard T.R."/>
            <person name="Planyavsky M."/>
            <person name="Kaupe I."/>
            <person name="Breitwieser F.P."/>
            <person name="Buerckstuemmer T."/>
            <person name="Bennett K.L."/>
            <person name="Superti-Furga G."/>
            <person name="Colinge J."/>
        </authorList>
    </citation>
    <scope>IDENTIFICATION BY MASS SPECTROMETRY [LARGE SCALE ANALYSIS]</scope>
</reference>
<reference key="12">
    <citation type="journal article" date="2012" name="J. Med. Genet.">
        <title>Mutation screening of 75 candidate genes in 152 complex I deficiency cases identifies pathogenic variants in 16 genes including NDUFB9.</title>
        <authorList>
            <person name="Haack T.B."/>
            <person name="Madignier F."/>
            <person name="Herzer M."/>
            <person name="Lamantea E."/>
            <person name="Danhauser K."/>
            <person name="Invernizzi F."/>
            <person name="Koch J."/>
            <person name="Freitag M."/>
            <person name="Drost R."/>
            <person name="Hillier I."/>
            <person name="Haberberger B."/>
            <person name="Mayr J.A."/>
            <person name="Ahting U."/>
            <person name="Tiranti V."/>
            <person name="Roetig A."/>
            <person name="Iuso A."/>
            <person name="Horvath R."/>
            <person name="Tesarova M."/>
            <person name="Baric I."/>
            <person name="Uziel G."/>
            <person name="Rolinski B."/>
            <person name="Sperl W."/>
            <person name="Meitinger T."/>
            <person name="Zeviani M."/>
            <person name="Freisinger P."/>
            <person name="Prokisch H."/>
        </authorList>
    </citation>
    <scope>INVOLVEMENT IN MC1DN24</scope>
    <scope>VARIANT MC1DN24 PRO-64</scope>
</reference>
<reference key="13">
    <citation type="journal article" date="2014" name="J. Proteomics">
        <title>An enzyme assisted RP-RPLC approach for in-depth analysis of human liver phosphoproteome.</title>
        <authorList>
            <person name="Bian Y."/>
            <person name="Song C."/>
            <person name="Cheng K."/>
            <person name="Dong M."/>
            <person name="Wang F."/>
            <person name="Huang J."/>
            <person name="Sun D."/>
            <person name="Wang L."/>
            <person name="Ye M."/>
            <person name="Zou H."/>
        </authorList>
    </citation>
    <scope>IDENTIFICATION BY MASS SPECTROMETRY [LARGE SCALE ANALYSIS]</scope>
    <source>
        <tissue>Liver</tissue>
    </source>
</reference>
<reference key="14">
    <citation type="journal article" date="2015" name="Proteomics">
        <title>N-terminome analysis of the human mitochondrial proteome.</title>
        <authorList>
            <person name="Vaca Jacome A.S."/>
            <person name="Rabilloud T."/>
            <person name="Schaeffer-Reiss C."/>
            <person name="Rompais M."/>
            <person name="Ayoub D."/>
            <person name="Lane L."/>
            <person name="Bairoch A."/>
            <person name="Van Dorsselaer A."/>
            <person name="Carapito C."/>
        </authorList>
    </citation>
    <scope>ACETYLATION [LARGE SCALE ANALYSIS] AT ALA-2</scope>
    <scope>CLEAVAGE OF INITIATOR METHIONINE [LARGE SCALE ANALYSIS]</scope>
    <scope>IDENTIFICATION BY MASS SPECTROMETRY [LARGE SCALE ANALYSIS]</scope>
</reference>
<reference key="15">
    <citation type="journal article" date="2016" name="Nature">
        <title>Accessory subunits are integral for assembly and function of human mitochondrial complex I.</title>
        <authorList>
            <person name="Stroud D.A."/>
            <person name="Surgenor E.E."/>
            <person name="Formosa L.E."/>
            <person name="Reljic B."/>
            <person name="Frazier A.E."/>
            <person name="Dibley M.G."/>
            <person name="Osellame L.D."/>
            <person name="Stait T."/>
            <person name="Beilharz T.H."/>
            <person name="Thorburn D.R."/>
            <person name="Salim A."/>
            <person name="Ryan M.T."/>
        </authorList>
    </citation>
    <scope>FUNCTION</scope>
    <scope>IDENTIFICATION IN THE NADH-UBIQUINONE OXIDOREDUCTASE COMPLEX</scope>
</reference>
<sequence>MAFLASGPYLTHQQKVLRLYKRALRHLESWCVQRDKYRYFACLMRARFEEHKNEKDMAKATQLLKEAEEEFWYRQHPQPYIFPDSPGGTSYERYDCYKVPEWCLDDWHPSEKAMYPDYFAKREQWKKLRRESWEREVKQLQEETPPGGPLTEALPPARKEGDLPPLWWYIVTRPRERPM</sequence>